<name>SYH_SHESW</name>
<comment type="catalytic activity">
    <reaction evidence="1">
        <text>tRNA(His) + L-histidine + ATP = L-histidyl-tRNA(His) + AMP + diphosphate + H(+)</text>
        <dbReference type="Rhea" id="RHEA:17313"/>
        <dbReference type="Rhea" id="RHEA-COMP:9665"/>
        <dbReference type="Rhea" id="RHEA-COMP:9689"/>
        <dbReference type="ChEBI" id="CHEBI:15378"/>
        <dbReference type="ChEBI" id="CHEBI:30616"/>
        <dbReference type="ChEBI" id="CHEBI:33019"/>
        <dbReference type="ChEBI" id="CHEBI:57595"/>
        <dbReference type="ChEBI" id="CHEBI:78442"/>
        <dbReference type="ChEBI" id="CHEBI:78527"/>
        <dbReference type="ChEBI" id="CHEBI:456215"/>
        <dbReference type="EC" id="6.1.1.21"/>
    </reaction>
</comment>
<comment type="subunit">
    <text evidence="1">Homodimer.</text>
</comment>
<comment type="subcellular location">
    <subcellularLocation>
        <location evidence="1">Cytoplasm</location>
    </subcellularLocation>
</comment>
<comment type="similarity">
    <text evidence="1">Belongs to the class-II aminoacyl-tRNA synthetase family.</text>
</comment>
<feature type="chain" id="PRO_1000016452" description="Histidine--tRNA ligase">
    <location>
        <begin position="1"/>
        <end position="425"/>
    </location>
</feature>
<evidence type="ECO:0000255" key="1">
    <source>
        <dbReference type="HAMAP-Rule" id="MF_00127"/>
    </source>
</evidence>
<reference key="1">
    <citation type="submission" date="2006-12" db="EMBL/GenBank/DDBJ databases">
        <title>Complete sequence of Shewanella sp. W3-18-1.</title>
        <authorList>
            <consortium name="US DOE Joint Genome Institute"/>
            <person name="Copeland A."/>
            <person name="Lucas S."/>
            <person name="Lapidus A."/>
            <person name="Barry K."/>
            <person name="Detter J.C."/>
            <person name="Glavina del Rio T."/>
            <person name="Hammon N."/>
            <person name="Israni S."/>
            <person name="Dalin E."/>
            <person name="Tice H."/>
            <person name="Pitluck S."/>
            <person name="Chain P."/>
            <person name="Malfatti S."/>
            <person name="Shin M."/>
            <person name="Vergez L."/>
            <person name="Schmutz J."/>
            <person name="Larimer F."/>
            <person name="Land M."/>
            <person name="Hauser L."/>
            <person name="Kyrpides N."/>
            <person name="Lykidis A."/>
            <person name="Tiedje J."/>
            <person name="Richardson P."/>
        </authorList>
    </citation>
    <scope>NUCLEOTIDE SEQUENCE [LARGE SCALE GENOMIC DNA]</scope>
    <source>
        <strain>W3-18-1</strain>
    </source>
</reference>
<proteinExistence type="inferred from homology"/>
<sequence>MAKQIQAIRGMNDILPTQSPLWQKVEAVLRSSVSAYGYSEIRTPIVENTDLFKRSIGEVTDIVEKEMYTFEDRNGDSLTLRPEGTASTVRAGNEHGLLYNQEQRLWYMGPMFRHERPQKGRYRQFHQFGVEVYGIGSADIDAEVLMLSARLWEKLGISEHVTLELNTLGDPAERAAYRDALIAFLEQHKDKLDEDSQRRMYSNPLRVLDSKDPQVQGILTDAPALMDYLGEESSQHFAQLRELLDAVGIQYRVNPRLVRGLDYYNRTVFEWVTNSLGSQGTVLAGGRYDGLVAQLGGKDTPAVGFAMGLERIVLLLETLGLTQDIPAAVDVYVTAMGENCLVEAIKVAQELRSALPHLKVMSHCGGGNVKKQMKRADKSGASVALLIGEEELAEGMVTVKHLRNDNEQQQVARNALSAFLAELTK</sequence>
<organism>
    <name type="scientific">Shewanella sp. (strain W3-18-1)</name>
    <dbReference type="NCBI Taxonomy" id="351745"/>
    <lineage>
        <taxon>Bacteria</taxon>
        <taxon>Pseudomonadati</taxon>
        <taxon>Pseudomonadota</taxon>
        <taxon>Gammaproteobacteria</taxon>
        <taxon>Alteromonadales</taxon>
        <taxon>Shewanellaceae</taxon>
        <taxon>Shewanella</taxon>
    </lineage>
</organism>
<dbReference type="EC" id="6.1.1.21" evidence="1"/>
<dbReference type="EMBL" id="CP000503">
    <property type="protein sequence ID" value="ABM24199.1"/>
    <property type="molecule type" value="Genomic_DNA"/>
</dbReference>
<dbReference type="RefSeq" id="WP_011788705.1">
    <property type="nucleotide sequence ID" value="NC_008750.1"/>
</dbReference>
<dbReference type="SMR" id="A1RHQ4"/>
<dbReference type="GeneID" id="67444252"/>
<dbReference type="KEGG" id="shw:Sputw3181_1356"/>
<dbReference type="HOGENOM" id="CLU_025113_1_1_6"/>
<dbReference type="Proteomes" id="UP000002597">
    <property type="component" value="Chromosome"/>
</dbReference>
<dbReference type="GO" id="GO:0005737">
    <property type="term" value="C:cytoplasm"/>
    <property type="evidence" value="ECO:0007669"/>
    <property type="project" value="UniProtKB-SubCell"/>
</dbReference>
<dbReference type="GO" id="GO:0005524">
    <property type="term" value="F:ATP binding"/>
    <property type="evidence" value="ECO:0007669"/>
    <property type="project" value="UniProtKB-UniRule"/>
</dbReference>
<dbReference type="GO" id="GO:0004821">
    <property type="term" value="F:histidine-tRNA ligase activity"/>
    <property type="evidence" value="ECO:0007669"/>
    <property type="project" value="UniProtKB-UniRule"/>
</dbReference>
<dbReference type="GO" id="GO:0006427">
    <property type="term" value="P:histidyl-tRNA aminoacylation"/>
    <property type="evidence" value="ECO:0007669"/>
    <property type="project" value="UniProtKB-UniRule"/>
</dbReference>
<dbReference type="CDD" id="cd00773">
    <property type="entry name" value="HisRS-like_core"/>
    <property type="match status" value="1"/>
</dbReference>
<dbReference type="CDD" id="cd00859">
    <property type="entry name" value="HisRS_anticodon"/>
    <property type="match status" value="1"/>
</dbReference>
<dbReference type="FunFam" id="3.30.930.10:FF:000005">
    <property type="entry name" value="Histidine--tRNA ligase"/>
    <property type="match status" value="1"/>
</dbReference>
<dbReference type="Gene3D" id="3.40.50.800">
    <property type="entry name" value="Anticodon-binding domain"/>
    <property type="match status" value="1"/>
</dbReference>
<dbReference type="Gene3D" id="3.30.930.10">
    <property type="entry name" value="Bira Bifunctional Protein, Domain 2"/>
    <property type="match status" value="1"/>
</dbReference>
<dbReference type="HAMAP" id="MF_00127">
    <property type="entry name" value="His_tRNA_synth"/>
    <property type="match status" value="1"/>
</dbReference>
<dbReference type="InterPro" id="IPR006195">
    <property type="entry name" value="aa-tRNA-synth_II"/>
</dbReference>
<dbReference type="InterPro" id="IPR045864">
    <property type="entry name" value="aa-tRNA-synth_II/BPL/LPL"/>
</dbReference>
<dbReference type="InterPro" id="IPR004154">
    <property type="entry name" value="Anticodon-bd"/>
</dbReference>
<dbReference type="InterPro" id="IPR036621">
    <property type="entry name" value="Anticodon-bd_dom_sf"/>
</dbReference>
<dbReference type="InterPro" id="IPR015807">
    <property type="entry name" value="His-tRNA-ligase"/>
</dbReference>
<dbReference type="InterPro" id="IPR041715">
    <property type="entry name" value="HisRS-like_core"/>
</dbReference>
<dbReference type="InterPro" id="IPR004516">
    <property type="entry name" value="HisRS/HisZ"/>
</dbReference>
<dbReference type="InterPro" id="IPR033656">
    <property type="entry name" value="HisRS_anticodon"/>
</dbReference>
<dbReference type="NCBIfam" id="TIGR00442">
    <property type="entry name" value="hisS"/>
    <property type="match status" value="1"/>
</dbReference>
<dbReference type="PANTHER" id="PTHR43707:SF1">
    <property type="entry name" value="HISTIDINE--TRNA LIGASE, MITOCHONDRIAL-RELATED"/>
    <property type="match status" value="1"/>
</dbReference>
<dbReference type="PANTHER" id="PTHR43707">
    <property type="entry name" value="HISTIDYL-TRNA SYNTHETASE"/>
    <property type="match status" value="1"/>
</dbReference>
<dbReference type="Pfam" id="PF03129">
    <property type="entry name" value="HGTP_anticodon"/>
    <property type="match status" value="1"/>
</dbReference>
<dbReference type="Pfam" id="PF13393">
    <property type="entry name" value="tRNA-synt_His"/>
    <property type="match status" value="1"/>
</dbReference>
<dbReference type="PIRSF" id="PIRSF001549">
    <property type="entry name" value="His-tRNA_synth"/>
    <property type="match status" value="1"/>
</dbReference>
<dbReference type="SUPFAM" id="SSF52954">
    <property type="entry name" value="Class II aaRS ABD-related"/>
    <property type="match status" value="1"/>
</dbReference>
<dbReference type="SUPFAM" id="SSF55681">
    <property type="entry name" value="Class II aaRS and biotin synthetases"/>
    <property type="match status" value="1"/>
</dbReference>
<dbReference type="PROSITE" id="PS50862">
    <property type="entry name" value="AA_TRNA_LIGASE_II"/>
    <property type="match status" value="1"/>
</dbReference>
<keyword id="KW-0030">Aminoacyl-tRNA synthetase</keyword>
<keyword id="KW-0067">ATP-binding</keyword>
<keyword id="KW-0963">Cytoplasm</keyword>
<keyword id="KW-0436">Ligase</keyword>
<keyword id="KW-0547">Nucleotide-binding</keyword>
<keyword id="KW-0648">Protein biosynthesis</keyword>
<gene>
    <name evidence="1" type="primary">hisS</name>
    <name type="ordered locus">Sputw3181_1356</name>
</gene>
<accession>A1RHQ4</accession>
<protein>
    <recommendedName>
        <fullName evidence="1">Histidine--tRNA ligase</fullName>
        <ecNumber evidence="1">6.1.1.21</ecNumber>
    </recommendedName>
    <alternativeName>
        <fullName evidence="1">Histidyl-tRNA synthetase</fullName>
        <shortName evidence="1">HisRS</shortName>
    </alternativeName>
</protein>